<gene>
    <name evidence="1" type="primary">coaA</name>
    <name type="ordered locus">ECP_4188</name>
</gene>
<sequence>MSIKEQTLMTPYLQFDRNQWAALRDSVPMTLSEDEIARLKGINEDLSLEEVAEIYLPLSRLLNFYISSNLRRQAVLEQFLGTNGQRIPYIISIAGSVAVGKSTTARVLQALLSRWPEHRRVELITTDGFLHPNQVLKERGLMKKKGFPESYDMHRLVKFVSDLKSGVPNVTAPVYSHLIYDVIPDGDKTVVQPDILILEGLNVLQSGMDYPHDPHHVFVSDFVDFSIYVDAPEDLLQTWYINRFLKFREGAFTDPDSYFHNYAKLTKEEAIKTAMTLWKEINWLNLKQNILPTRERASLILTKSANHAVEEVRLRK</sequence>
<feature type="chain" id="PRO_0000325554" description="Pantothenate kinase">
    <location>
        <begin position="1"/>
        <end position="316"/>
    </location>
</feature>
<feature type="binding site" evidence="1">
    <location>
        <begin position="95"/>
        <end position="102"/>
    </location>
    <ligand>
        <name>ATP</name>
        <dbReference type="ChEBI" id="CHEBI:30616"/>
    </ligand>
</feature>
<reference key="1">
    <citation type="journal article" date="2006" name="Mol. Microbiol.">
        <title>Role of pathogenicity island-associated integrases in the genome plasticity of uropathogenic Escherichia coli strain 536.</title>
        <authorList>
            <person name="Hochhut B."/>
            <person name="Wilde C."/>
            <person name="Balling G."/>
            <person name="Middendorf B."/>
            <person name="Dobrindt U."/>
            <person name="Brzuszkiewicz E."/>
            <person name="Gottschalk G."/>
            <person name="Carniel E."/>
            <person name="Hacker J."/>
        </authorList>
    </citation>
    <scope>NUCLEOTIDE SEQUENCE [LARGE SCALE GENOMIC DNA]</scope>
    <source>
        <strain>536 / UPEC</strain>
    </source>
</reference>
<proteinExistence type="inferred from homology"/>
<accession>Q0TA86</accession>
<name>COAA_ECOL5</name>
<comment type="catalytic activity">
    <reaction evidence="1">
        <text>(R)-pantothenate + ATP = (R)-4'-phosphopantothenate + ADP + H(+)</text>
        <dbReference type="Rhea" id="RHEA:16373"/>
        <dbReference type="ChEBI" id="CHEBI:10986"/>
        <dbReference type="ChEBI" id="CHEBI:15378"/>
        <dbReference type="ChEBI" id="CHEBI:29032"/>
        <dbReference type="ChEBI" id="CHEBI:30616"/>
        <dbReference type="ChEBI" id="CHEBI:456216"/>
        <dbReference type="EC" id="2.7.1.33"/>
    </reaction>
</comment>
<comment type="pathway">
    <text evidence="1">Cofactor biosynthesis; coenzyme A biosynthesis; CoA from (R)-pantothenate: step 1/5.</text>
</comment>
<comment type="subcellular location">
    <subcellularLocation>
        <location evidence="1">Cytoplasm</location>
    </subcellularLocation>
</comment>
<comment type="similarity">
    <text evidence="1">Belongs to the prokaryotic pantothenate kinase family.</text>
</comment>
<comment type="sequence caution" evidence="2">
    <conflict type="erroneous initiation">
        <sequence resource="EMBL-CDS" id="ABG72143"/>
    </conflict>
</comment>
<protein>
    <recommendedName>
        <fullName evidence="1">Pantothenate kinase</fullName>
        <ecNumber evidence="1">2.7.1.33</ecNumber>
    </recommendedName>
    <alternativeName>
        <fullName evidence="1">Pantothenic acid kinase</fullName>
    </alternativeName>
</protein>
<dbReference type="EC" id="2.7.1.33" evidence="1"/>
<dbReference type="EMBL" id="CP000247">
    <property type="protein sequence ID" value="ABG72143.1"/>
    <property type="status" value="ALT_INIT"/>
    <property type="molecule type" value="Genomic_DNA"/>
</dbReference>
<dbReference type="RefSeq" id="WP_000023081.1">
    <property type="nucleotide sequence ID" value="NC_008253.1"/>
</dbReference>
<dbReference type="SMR" id="Q0TA86"/>
<dbReference type="GeneID" id="93777919"/>
<dbReference type="KEGG" id="ecp:ECP_4188"/>
<dbReference type="HOGENOM" id="CLU_053818_1_1_6"/>
<dbReference type="UniPathway" id="UPA00241">
    <property type="reaction ID" value="UER00352"/>
</dbReference>
<dbReference type="Proteomes" id="UP000009182">
    <property type="component" value="Chromosome"/>
</dbReference>
<dbReference type="GO" id="GO:0005737">
    <property type="term" value="C:cytoplasm"/>
    <property type="evidence" value="ECO:0007669"/>
    <property type="project" value="UniProtKB-SubCell"/>
</dbReference>
<dbReference type="GO" id="GO:0005524">
    <property type="term" value="F:ATP binding"/>
    <property type="evidence" value="ECO:0007669"/>
    <property type="project" value="UniProtKB-UniRule"/>
</dbReference>
<dbReference type="GO" id="GO:0004594">
    <property type="term" value="F:pantothenate kinase activity"/>
    <property type="evidence" value="ECO:0007669"/>
    <property type="project" value="UniProtKB-UniRule"/>
</dbReference>
<dbReference type="GO" id="GO:0015937">
    <property type="term" value="P:coenzyme A biosynthetic process"/>
    <property type="evidence" value="ECO:0007669"/>
    <property type="project" value="UniProtKB-UniRule"/>
</dbReference>
<dbReference type="CDD" id="cd02025">
    <property type="entry name" value="PanK"/>
    <property type="match status" value="1"/>
</dbReference>
<dbReference type="FunFam" id="3.40.50.300:FF:000242">
    <property type="entry name" value="Pantothenate kinase"/>
    <property type="match status" value="1"/>
</dbReference>
<dbReference type="Gene3D" id="3.40.50.300">
    <property type="entry name" value="P-loop containing nucleotide triphosphate hydrolases"/>
    <property type="match status" value="1"/>
</dbReference>
<dbReference type="HAMAP" id="MF_00215">
    <property type="entry name" value="Pantothen_kinase_1"/>
    <property type="match status" value="1"/>
</dbReference>
<dbReference type="InterPro" id="IPR027417">
    <property type="entry name" value="P-loop_NTPase"/>
</dbReference>
<dbReference type="InterPro" id="IPR004566">
    <property type="entry name" value="PanK"/>
</dbReference>
<dbReference type="InterPro" id="IPR006083">
    <property type="entry name" value="PRK/URK"/>
</dbReference>
<dbReference type="NCBIfam" id="TIGR00554">
    <property type="entry name" value="panK_bact"/>
    <property type="match status" value="1"/>
</dbReference>
<dbReference type="PANTHER" id="PTHR10285">
    <property type="entry name" value="URIDINE KINASE"/>
    <property type="match status" value="1"/>
</dbReference>
<dbReference type="Pfam" id="PF00485">
    <property type="entry name" value="PRK"/>
    <property type="match status" value="1"/>
</dbReference>
<dbReference type="PIRSF" id="PIRSF000545">
    <property type="entry name" value="Pantothenate_kin"/>
    <property type="match status" value="1"/>
</dbReference>
<dbReference type="SUPFAM" id="SSF52540">
    <property type="entry name" value="P-loop containing nucleoside triphosphate hydrolases"/>
    <property type="match status" value="1"/>
</dbReference>
<evidence type="ECO:0000255" key="1">
    <source>
        <dbReference type="HAMAP-Rule" id="MF_00215"/>
    </source>
</evidence>
<evidence type="ECO:0000305" key="2"/>
<keyword id="KW-0067">ATP-binding</keyword>
<keyword id="KW-0173">Coenzyme A biosynthesis</keyword>
<keyword id="KW-0963">Cytoplasm</keyword>
<keyword id="KW-0418">Kinase</keyword>
<keyword id="KW-0547">Nucleotide-binding</keyword>
<keyword id="KW-0808">Transferase</keyword>
<organism>
    <name type="scientific">Escherichia coli O6:K15:H31 (strain 536 / UPEC)</name>
    <dbReference type="NCBI Taxonomy" id="362663"/>
    <lineage>
        <taxon>Bacteria</taxon>
        <taxon>Pseudomonadati</taxon>
        <taxon>Pseudomonadota</taxon>
        <taxon>Gammaproteobacteria</taxon>
        <taxon>Enterobacterales</taxon>
        <taxon>Enterobacteriaceae</taxon>
        <taxon>Escherichia</taxon>
    </lineage>
</organism>